<feature type="chain" id="PRO_0000113835" description="Protein GrpE">
    <location>
        <begin position="1"/>
        <end position="194"/>
    </location>
</feature>
<feature type="region of interest" description="Disordered" evidence="2">
    <location>
        <begin position="1"/>
        <end position="44"/>
    </location>
</feature>
<feature type="compositionally biased region" description="Basic and acidic residues" evidence="2">
    <location>
        <begin position="1"/>
        <end position="12"/>
    </location>
</feature>
<proteinExistence type="evidence at transcript level"/>
<organism>
    <name type="scientific">Porphyromonas gingivalis (strain ATCC BAA-308 / W83)</name>
    <dbReference type="NCBI Taxonomy" id="242619"/>
    <lineage>
        <taxon>Bacteria</taxon>
        <taxon>Pseudomonadati</taxon>
        <taxon>Bacteroidota</taxon>
        <taxon>Bacteroidia</taxon>
        <taxon>Bacteroidales</taxon>
        <taxon>Porphyromonadaceae</taxon>
        <taxon>Porphyromonas</taxon>
    </lineage>
</organism>
<gene>
    <name evidence="1" type="primary">grpE</name>
    <name type="ordered locus">PG_1775</name>
</gene>
<protein>
    <recommendedName>
        <fullName evidence="1">Protein GrpE</fullName>
    </recommendedName>
    <alternativeName>
        <fullName evidence="1">HSP-70 cofactor</fullName>
    </alternativeName>
</protein>
<evidence type="ECO:0000255" key="1">
    <source>
        <dbReference type="HAMAP-Rule" id="MF_01151"/>
    </source>
</evidence>
<evidence type="ECO:0000256" key="2">
    <source>
        <dbReference type="SAM" id="MobiDB-lite"/>
    </source>
</evidence>
<evidence type="ECO:0000269" key="3">
    <source>
    </source>
</evidence>
<reference key="1">
    <citation type="journal article" date="2003" name="J. Bacteriol.">
        <title>Complete genome sequence of the oral pathogenic bacterium Porphyromonas gingivalis strain W83.</title>
        <authorList>
            <person name="Nelson K.E."/>
            <person name="Fleischmann R.D."/>
            <person name="DeBoy R.T."/>
            <person name="Paulsen I.T."/>
            <person name="Fouts D.E."/>
            <person name="Eisen J.A."/>
            <person name="Daugherty S.C."/>
            <person name="Dodson R.J."/>
            <person name="Durkin A.S."/>
            <person name="Gwinn M.L."/>
            <person name="Haft D.H."/>
            <person name="Kolonay J.F."/>
            <person name="Nelson W.C."/>
            <person name="Mason T.M."/>
            <person name="Tallon L."/>
            <person name="Gray J."/>
            <person name="Granger D."/>
            <person name="Tettelin H."/>
            <person name="Dong H."/>
            <person name="Galvin J.L."/>
            <person name="Duncan M.J."/>
            <person name="Dewhirst F.E."/>
            <person name="Fraser C.M."/>
        </authorList>
    </citation>
    <scope>NUCLEOTIDE SEQUENCE [LARGE SCALE GENOMIC DNA]</scope>
    <source>
        <strain>ATCC BAA-308 / W83</strain>
    </source>
</reference>
<reference key="2">
    <citation type="journal article" date="2016" name="Microbiology">
        <title>Role of the Porphyromonas gingivalis iron-binding protein PG1777 in oxidative stress resistance.</title>
        <authorList>
            <person name="McKenzie R.M.E."/>
            <person name="Henry L.G."/>
            <person name="Boutrin M.C."/>
            <person name="Ximinies A."/>
            <person name="Fletcher H.M."/>
        </authorList>
    </citation>
    <scope>INDUCTION BY HYDROGEN PEROXIDE</scope>
</reference>
<comment type="function">
    <text evidence="1">Participates actively in the response to hyperosmotic and heat shock by preventing the aggregation of stress-denatured proteins, in association with DnaK and GrpE. It is the nucleotide exchange factor for DnaK and may function as a thermosensor. Unfolded proteins bind initially to DnaJ; upon interaction with the DnaJ-bound protein, DnaK hydrolyzes its bound ATP, resulting in the formation of a stable complex. GrpE releases ADP from DnaK; ATP binding to DnaK triggers the release of the substrate protein, thus completing the reaction cycle. Several rounds of ATP-dependent interactions between DnaJ, DnaK and GrpE are required for fully efficient folding.</text>
</comment>
<comment type="subunit">
    <text evidence="1">Homodimer.</text>
</comment>
<comment type="subcellular location">
    <subcellularLocation>
        <location evidence="1">Cytoplasm</location>
    </subcellularLocation>
</comment>
<comment type="induction">
    <text evidence="3">Low level background expression highly induced by oxidative stress due to hydrogen peroxide.</text>
</comment>
<comment type="miscellaneous">
    <text evidence="3">The grpE-dnaJ-PG1777-PG1778-PG1779 genes are co-transcribed and may form an operon.</text>
</comment>
<comment type="similarity">
    <text evidence="1">Belongs to the GrpE family.</text>
</comment>
<name>GRPE_PORGI</name>
<dbReference type="EMBL" id="AE015924">
    <property type="protein sequence ID" value="AAQ66776.1"/>
    <property type="molecule type" value="Genomic_DNA"/>
</dbReference>
<dbReference type="RefSeq" id="WP_005873720.1">
    <property type="nucleotide sequence ID" value="NC_002950.2"/>
</dbReference>
<dbReference type="SMR" id="Q7MU00"/>
<dbReference type="STRING" id="242619.PG_1775"/>
<dbReference type="EnsemblBacteria" id="AAQ66776">
    <property type="protein sequence ID" value="AAQ66776"/>
    <property type="gene ID" value="PG_1775"/>
</dbReference>
<dbReference type="KEGG" id="pgi:PG_1775"/>
<dbReference type="PATRIC" id="fig|242619.8.peg.1642"/>
<dbReference type="eggNOG" id="COG0576">
    <property type="taxonomic scope" value="Bacteria"/>
</dbReference>
<dbReference type="HOGENOM" id="CLU_057217_5_2_10"/>
<dbReference type="BioCyc" id="PGIN242619:G1G02-1656-MONOMER"/>
<dbReference type="Proteomes" id="UP000000588">
    <property type="component" value="Chromosome"/>
</dbReference>
<dbReference type="GO" id="GO:0005737">
    <property type="term" value="C:cytoplasm"/>
    <property type="evidence" value="ECO:0007669"/>
    <property type="project" value="UniProtKB-SubCell"/>
</dbReference>
<dbReference type="GO" id="GO:0000774">
    <property type="term" value="F:adenyl-nucleotide exchange factor activity"/>
    <property type="evidence" value="ECO:0007669"/>
    <property type="project" value="InterPro"/>
</dbReference>
<dbReference type="GO" id="GO:0042803">
    <property type="term" value="F:protein homodimerization activity"/>
    <property type="evidence" value="ECO:0007669"/>
    <property type="project" value="InterPro"/>
</dbReference>
<dbReference type="GO" id="GO:0051087">
    <property type="term" value="F:protein-folding chaperone binding"/>
    <property type="evidence" value="ECO:0007669"/>
    <property type="project" value="InterPro"/>
</dbReference>
<dbReference type="GO" id="GO:0051082">
    <property type="term" value="F:unfolded protein binding"/>
    <property type="evidence" value="ECO:0007669"/>
    <property type="project" value="TreeGrafter"/>
</dbReference>
<dbReference type="GO" id="GO:0006457">
    <property type="term" value="P:protein folding"/>
    <property type="evidence" value="ECO:0007669"/>
    <property type="project" value="InterPro"/>
</dbReference>
<dbReference type="CDD" id="cd00446">
    <property type="entry name" value="GrpE"/>
    <property type="match status" value="1"/>
</dbReference>
<dbReference type="Gene3D" id="3.90.20.20">
    <property type="match status" value="1"/>
</dbReference>
<dbReference type="Gene3D" id="2.30.22.10">
    <property type="entry name" value="Head domain of nucleotide exchange factor GrpE"/>
    <property type="match status" value="1"/>
</dbReference>
<dbReference type="HAMAP" id="MF_01151">
    <property type="entry name" value="GrpE"/>
    <property type="match status" value="1"/>
</dbReference>
<dbReference type="InterPro" id="IPR000740">
    <property type="entry name" value="GrpE"/>
</dbReference>
<dbReference type="InterPro" id="IPR013805">
    <property type="entry name" value="GrpE_coiled_coil"/>
</dbReference>
<dbReference type="InterPro" id="IPR009012">
    <property type="entry name" value="GrpE_head"/>
</dbReference>
<dbReference type="PANTHER" id="PTHR21237">
    <property type="entry name" value="GRPE PROTEIN"/>
    <property type="match status" value="1"/>
</dbReference>
<dbReference type="PANTHER" id="PTHR21237:SF23">
    <property type="entry name" value="GRPE PROTEIN HOMOLOG, MITOCHONDRIAL"/>
    <property type="match status" value="1"/>
</dbReference>
<dbReference type="Pfam" id="PF01025">
    <property type="entry name" value="GrpE"/>
    <property type="match status" value="1"/>
</dbReference>
<dbReference type="PRINTS" id="PR00773">
    <property type="entry name" value="GRPEPROTEIN"/>
</dbReference>
<dbReference type="SUPFAM" id="SSF58014">
    <property type="entry name" value="Coiled-coil domain of nucleotide exchange factor GrpE"/>
    <property type="match status" value="1"/>
</dbReference>
<dbReference type="SUPFAM" id="SSF51064">
    <property type="entry name" value="Head domain of nucleotide exchange factor GrpE"/>
    <property type="match status" value="1"/>
</dbReference>
<dbReference type="PROSITE" id="PS01071">
    <property type="entry name" value="GRPE"/>
    <property type="match status" value="1"/>
</dbReference>
<accession>Q7MU00</accession>
<sequence length="194" mass="21763">MNKQKNNRERTPQPEQDTERDEQLTNSHENDIDSAPAAEENDKVADPVEQLTAQLAALNDTHLRLMAEYDNYRKRTLKEKSELIRNGGEKVLVDLLPVIDDFERALSNLGDMSEPAAIKEGVELIYSKFMDYLQKQGVKKIETADLPFDADLCDAVAMIPAPSAEQKGKVIDCVKTGYTLNDKVIRHAHVVVGE</sequence>
<keyword id="KW-0143">Chaperone</keyword>
<keyword id="KW-0963">Cytoplasm</keyword>
<keyword id="KW-1185">Reference proteome</keyword>
<keyword id="KW-0346">Stress response</keyword>